<feature type="chain" id="PRO_1000068390" description="Probable phosphoketolase">
    <location>
        <begin position="1"/>
        <end position="796"/>
    </location>
</feature>
<feature type="helix" evidence="2">
    <location>
        <begin position="15"/>
        <end position="37"/>
    </location>
</feature>
<feature type="strand" evidence="2">
    <location>
        <begin position="38"/>
        <end position="40"/>
    </location>
</feature>
<feature type="helix" evidence="2">
    <location>
        <begin position="50"/>
        <end position="52"/>
    </location>
</feature>
<feature type="helix" evidence="2">
    <location>
        <begin position="64"/>
        <end position="81"/>
    </location>
</feature>
<feature type="strand" evidence="2">
    <location>
        <begin position="84"/>
        <end position="90"/>
    </location>
</feature>
<feature type="helix" evidence="2">
    <location>
        <begin position="92"/>
        <end position="94"/>
    </location>
</feature>
<feature type="helix" evidence="2">
    <location>
        <begin position="95"/>
        <end position="104"/>
    </location>
</feature>
<feature type="helix" evidence="2">
    <location>
        <begin position="107"/>
        <end position="111"/>
    </location>
</feature>
<feature type="helix" evidence="2">
    <location>
        <begin position="119"/>
        <end position="128"/>
    </location>
</feature>
<feature type="helix" evidence="2">
    <location>
        <begin position="156"/>
        <end position="164"/>
    </location>
</feature>
<feature type="strand" evidence="2">
    <location>
        <begin position="170"/>
        <end position="177"/>
    </location>
</feature>
<feature type="helix" evidence="2">
    <location>
        <begin position="180"/>
        <end position="182"/>
    </location>
</feature>
<feature type="helix" evidence="2">
    <location>
        <begin position="184"/>
        <end position="189"/>
    </location>
</feature>
<feature type="helix" evidence="2">
    <location>
        <begin position="190"/>
        <end position="194"/>
    </location>
</feature>
<feature type="turn" evidence="2">
    <location>
        <begin position="198"/>
        <end position="200"/>
    </location>
</feature>
<feature type="strand" evidence="2">
    <location>
        <begin position="203"/>
        <end position="209"/>
    </location>
</feature>
<feature type="strand" evidence="2">
    <location>
        <begin position="212"/>
        <end position="218"/>
    </location>
</feature>
<feature type="helix" evidence="2">
    <location>
        <begin position="220"/>
        <end position="223"/>
    </location>
</feature>
<feature type="helix" evidence="2">
    <location>
        <begin position="226"/>
        <end position="235"/>
    </location>
</feature>
<feature type="strand" evidence="2">
    <location>
        <begin position="238"/>
        <end position="244"/>
    </location>
</feature>
<feature type="helix" evidence="2">
    <location>
        <begin position="248"/>
        <end position="274"/>
    </location>
</feature>
<feature type="strand" evidence="2">
    <location>
        <begin position="284"/>
        <end position="290"/>
    </location>
</feature>
<feature type="turn" evidence="2">
    <location>
        <begin position="293"/>
        <end position="296"/>
    </location>
</feature>
<feature type="strand" evidence="2">
    <location>
        <begin position="299"/>
        <end position="301"/>
    </location>
</feature>
<feature type="strand" evidence="5">
    <location>
        <begin position="307"/>
        <end position="309"/>
    </location>
</feature>
<feature type="helix" evidence="2">
    <location>
        <begin position="310"/>
        <end position="312"/>
    </location>
</feature>
<feature type="turn" evidence="2">
    <location>
        <begin position="320"/>
        <end position="322"/>
    </location>
</feature>
<feature type="helix" evidence="2">
    <location>
        <begin position="324"/>
        <end position="335"/>
    </location>
</feature>
<feature type="helix" evidence="2">
    <location>
        <begin position="339"/>
        <end position="341"/>
    </location>
</feature>
<feature type="strand" evidence="3">
    <location>
        <begin position="345"/>
        <end position="349"/>
    </location>
</feature>
<feature type="helix" evidence="2">
    <location>
        <begin position="351"/>
        <end position="355"/>
    </location>
</feature>
<feature type="helix" evidence="2">
    <location>
        <begin position="360"/>
        <end position="362"/>
    </location>
</feature>
<feature type="strand" evidence="2">
    <location>
        <begin position="363"/>
        <end position="366"/>
    </location>
</feature>
<feature type="helix" evidence="2">
    <location>
        <begin position="368"/>
        <end position="375"/>
    </location>
</feature>
<feature type="helix" evidence="2">
    <location>
        <begin position="384"/>
        <end position="386"/>
    </location>
</feature>
<feature type="turn" evidence="2">
    <location>
        <begin position="394"/>
        <end position="396"/>
    </location>
</feature>
<feature type="strand" evidence="2">
    <location>
        <begin position="398"/>
        <end position="402"/>
    </location>
</feature>
<feature type="helix" evidence="2">
    <location>
        <begin position="403"/>
        <end position="415"/>
    </location>
</feature>
<feature type="turn" evidence="2">
    <location>
        <begin position="417"/>
        <end position="419"/>
    </location>
</feature>
<feature type="strand" evidence="2">
    <location>
        <begin position="420"/>
        <end position="426"/>
    </location>
</feature>
<feature type="turn" evidence="2">
    <location>
        <begin position="428"/>
        <end position="432"/>
    </location>
</feature>
<feature type="helix" evidence="2">
    <location>
        <begin position="434"/>
        <end position="438"/>
    </location>
</feature>
<feature type="helix" evidence="2">
    <location>
        <begin position="450"/>
        <end position="453"/>
    </location>
</feature>
<feature type="turn" evidence="2">
    <location>
        <begin position="454"/>
        <end position="456"/>
    </location>
</feature>
<feature type="strand" evidence="4">
    <location>
        <begin position="458"/>
        <end position="461"/>
    </location>
</feature>
<feature type="strand" evidence="2">
    <location>
        <begin position="463"/>
        <end position="466"/>
    </location>
</feature>
<feature type="helix" evidence="2">
    <location>
        <begin position="470"/>
        <end position="482"/>
    </location>
</feature>
<feature type="strand" evidence="2">
    <location>
        <begin position="486"/>
        <end position="493"/>
    </location>
</feature>
<feature type="helix" evidence="2">
    <location>
        <begin position="494"/>
        <end position="499"/>
    </location>
</feature>
<feature type="helix" evidence="2">
    <location>
        <begin position="500"/>
        <end position="515"/>
    </location>
</feature>
<feature type="strand" evidence="2">
    <location>
        <begin position="526"/>
        <end position="532"/>
    </location>
</feature>
<feature type="strand" evidence="2">
    <location>
        <begin position="534"/>
        <end position="536"/>
    </location>
</feature>
<feature type="strand" evidence="2">
    <location>
        <begin position="539"/>
        <end position="541"/>
    </location>
</feature>
<feature type="helix" evidence="2">
    <location>
        <begin position="548"/>
        <end position="553"/>
    </location>
</feature>
<feature type="turn" evidence="2">
    <location>
        <begin position="558"/>
        <end position="560"/>
    </location>
</feature>
<feature type="strand" evidence="2">
    <location>
        <begin position="561"/>
        <end position="564"/>
    </location>
</feature>
<feature type="helix" evidence="2">
    <location>
        <begin position="569"/>
        <end position="579"/>
    </location>
</feature>
<feature type="strand" evidence="2">
    <location>
        <begin position="586"/>
        <end position="590"/>
    </location>
</feature>
<feature type="strand" evidence="2">
    <location>
        <begin position="594"/>
        <end position="597"/>
    </location>
</feature>
<feature type="helix" evidence="2">
    <location>
        <begin position="602"/>
        <end position="611"/>
    </location>
</feature>
<feature type="strand" evidence="2">
    <location>
        <begin position="612"/>
        <end position="615"/>
    </location>
</feature>
<feature type="turn" evidence="2">
    <location>
        <begin position="617"/>
        <end position="619"/>
    </location>
</feature>
<feature type="strand" evidence="4">
    <location>
        <begin position="623"/>
        <end position="625"/>
    </location>
</feature>
<feature type="strand" evidence="2">
    <location>
        <begin position="628"/>
        <end position="635"/>
    </location>
</feature>
<feature type="helix" evidence="2">
    <location>
        <begin position="636"/>
        <end position="652"/>
    </location>
</feature>
<feature type="strand" evidence="2">
    <location>
        <begin position="658"/>
        <end position="665"/>
    </location>
</feature>
<feature type="helix" evidence="2">
    <location>
        <begin position="666"/>
        <end position="669"/>
    </location>
</feature>
<feature type="turn" evidence="2">
    <location>
        <begin position="672"/>
        <end position="674"/>
    </location>
</feature>
<feature type="helix" evidence="2">
    <location>
        <begin position="681"/>
        <end position="687"/>
    </location>
</feature>
<feature type="strand" evidence="2">
    <location>
        <begin position="690"/>
        <end position="692"/>
    </location>
</feature>
<feature type="strand" evidence="2">
    <location>
        <begin position="694"/>
        <end position="700"/>
    </location>
</feature>
<feature type="helix" evidence="2">
    <location>
        <begin position="702"/>
        <end position="708"/>
    </location>
</feature>
<feature type="turn" evidence="2">
    <location>
        <begin position="709"/>
        <end position="711"/>
    </location>
</feature>
<feature type="helix" evidence="2">
    <location>
        <begin position="715"/>
        <end position="717"/>
    </location>
</feature>
<feature type="strand" evidence="2">
    <location>
        <begin position="718"/>
        <end position="721"/>
    </location>
</feature>
<feature type="helix" evidence="2">
    <location>
        <begin position="732"/>
        <end position="738"/>
    </location>
</feature>
<feature type="helix" evidence="2">
    <location>
        <begin position="743"/>
        <end position="753"/>
    </location>
</feature>
<feature type="helix" evidence="2">
    <location>
        <begin position="755"/>
        <end position="757"/>
    </location>
</feature>
<feature type="turn" evidence="2">
    <location>
        <begin position="758"/>
        <end position="761"/>
    </location>
</feature>
<feature type="helix" evidence="2">
    <location>
        <begin position="762"/>
        <end position="782"/>
    </location>
</feature>
<feature type="helix" evidence="2">
    <location>
        <begin position="787"/>
        <end position="790"/>
    </location>
</feature>
<gene>
    <name type="ordered locus">Synpcc7942_2080</name>
</gene>
<sequence length="796" mass="89026">MTSTLQATDIATLSPNEQAAIDAWWRAANYLSVGQIYLRDNPLLQEPLRPEHIKQRLLGHWGSDPGLSFVYVHLNRLIRRLDLNLIYVTGPGHGAPALLANAWLEGTYSEVYPNCQQSTAGLQQFFKQFSFPGGIGSHCTPETPGSIHEGGELGYSLSHAFGAALDNPDLIVACVIGDGEAETGPLATSWHSNKFLNPAQDGAVLPILHLNGYKIANPTLLSRISHEELRSLFIGYGYEPFFVEGNDPAILHGVMASTLATCVQKIQAIQAAARSGESSDRPMWPMIVLRTPKGWTGPATIKGHVVEGSWRSHQVPMADVLTNPEHLQLLEDWLRSYRPEELFDASGAPVAELQAIAPIGDRRMSANPVTNGGLLRRALTLPDFRDQAVSVPAPGKSRADSTRPLGQFLREVIRHNPDNFRLFGPDETASNRLDAVYEVTSKVWLGDRIPEDEDGGHLSDRGRVMEILSEHTLEGWLEAYLLTGRHGFFATYEAFAHVIDSMVNQHAKWLDVSKREVDWRAPVSSLNILLSSTVWRQDHNGFSHQDPGFIDLVTNKSARVTRIYLPPDANCLLSVADHCLRSTDYINVIVADKQSHLQYLDAEAAARHCAKGIGIWDWASNDQGASPDVVIASCGDVVTLEALAATALLREHFPDLKIRFVNVVDLFRLQPDTEHPHGLSDRDFDSLFTVDKPIIFNFHGYPWLIHKLAYRRHNHNNLHVRGYKEVGNINTPLELAIRNQVDRFNLAIDVIDRVPHLRDRGAHVKEWLKDQIHDHIQYAYQEGIDRPEINQWQWPF</sequence>
<protein>
    <recommendedName>
        <fullName evidence="1">Probable phosphoketolase</fullName>
        <ecNumber evidence="1">4.1.2.-</ecNumber>
    </recommendedName>
</protein>
<evidence type="ECO:0000255" key="1">
    <source>
        <dbReference type="HAMAP-Rule" id="MF_01403"/>
    </source>
</evidence>
<evidence type="ECO:0007829" key="2">
    <source>
        <dbReference type="PDB" id="8IO8"/>
    </source>
</evidence>
<evidence type="ECO:0007829" key="3">
    <source>
        <dbReference type="PDB" id="8IO9"/>
    </source>
</evidence>
<evidence type="ECO:0007829" key="4">
    <source>
        <dbReference type="PDB" id="8IOA"/>
    </source>
</evidence>
<evidence type="ECO:0007829" key="5">
    <source>
        <dbReference type="PDB" id="8IOE"/>
    </source>
</evidence>
<accession>Q31LF9</accession>
<comment type="cofactor">
    <cofactor evidence="1">
        <name>thiamine diphosphate</name>
        <dbReference type="ChEBI" id="CHEBI:58937"/>
    </cofactor>
</comment>
<comment type="similarity">
    <text evidence="1">Belongs to the XFP family.</text>
</comment>
<organism>
    <name type="scientific">Synechococcus elongatus (strain ATCC 33912 / PCC 7942 / FACHB-805)</name>
    <name type="common">Anacystis nidulans R2</name>
    <dbReference type="NCBI Taxonomy" id="1140"/>
    <lineage>
        <taxon>Bacteria</taxon>
        <taxon>Bacillati</taxon>
        <taxon>Cyanobacteriota</taxon>
        <taxon>Cyanophyceae</taxon>
        <taxon>Synechococcales</taxon>
        <taxon>Synechococcaceae</taxon>
        <taxon>Synechococcus</taxon>
    </lineage>
</organism>
<reference key="1">
    <citation type="submission" date="2005-08" db="EMBL/GenBank/DDBJ databases">
        <title>Complete sequence of chromosome 1 of Synechococcus elongatus PCC 7942.</title>
        <authorList>
            <consortium name="US DOE Joint Genome Institute"/>
            <person name="Copeland A."/>
            <person name="Lucas S."/>
            <person name="Lapidus A."/>
            <person name="Barry K."/>
            <person name="Detter J.C."/>
            <person name="Glavina T."/>
            <person name="Hammon N."/>
            <person name="Israni S."/>
            <person name="Pitluck S."/>
            <person name="Schmutz J."/>
            <person name="Larimer F."/>
            <person name="Land M."/>
            <person name="Kyrpides N."/>
            <person name="Lykidis A."/>
            <person name="Golden S."/>
            <person name="Richardson P."/>
        </authorList>
    </citation>
    <scope>NUCLEOTIDE SEQUENCE [LARGE SCALE GENOMIC DNA]</scope>
    <source>
        <strain>ATCC 33912 / PCC 7942 / FACHB-805</strain>
    </source>
</reference>
<proteinExistence type="evidence at protein level"/>
<keyword id="KW-0002">3D-structure</keyword>
<keyword id="KW-0456">Lyase</keyword>
<keyword id="KW-1185">Reference proteome</keyword>
<keyword id="KW-0786">Thiamine pyrophosphate</keyword>
<dbReference type="EC" id="4.1.2.-" evidence="1"/>
<dbReference type="EMBL" id="CP000100">
    <property type="protein sequence ID" value="ABB58110.1"/>
    <property type="molecule type" value="Genomic_DNA"/>
</dbReference>
<dbReference type="RefSeq" id="WP_011244323.1">
    <property type="nucleotide sequence ID" value="NZ_JACJTX010000001.1"/>
</dbReference>
<dbReference type="PDB" id="8IO8">
    <property type="method" value="EM"/>
    <property type="resolution" value="2.17 A"/>
    <property type="chains" value="A/B=1-796"/>
</dbReference>
<dbReference type="PDB" id="8IO9">
    <property type="method" value="EM"/>
    <property type="resolution" value="2.36 A"/>
    <property type="chains" value="A/B/C/D/E/F/G/H/I/J/K/L=1-796"/>
</dbReference>
<dbReference type="PDB" id="8IOA">
    <property type="method" value="EM"/>
    <property type="resolution" value="2.63 A"/>
    <property type="chains" value="A/B=1-796"/>
</dbReference>
<dbReference type="PDB" id="8IOE">
    <property type="method" value="EM"/>
    <property type="resolution" value="2.86 A"/>
    <property type="chains" value="A/B/C/D/E/F/G/H/I/J/K/L=1-796"/>
</dbReference>
<dbReference type="PDBsum" id="8IO8"/>
<dbReference type="PDBsum" id="8IO9"/>
<dbReference type="PDBsum" id="8IOA"/>
<dbReference type="PDBsum" id="8IOE"/>
<dbReference type="EMDB" id="EMD-35611"/>
<dbReference type="SMR" id="Q31LF9"/>
<dbReference type="STRING" id="1140.Synpcc7942_2080"/>
<dbReference type="PaxDb" id="1140-Synpcc7942_2080"/>
<dbReference type="KEGG" id="syf:Synpcc7942_2080"/>
<dbReference type="eggNOG" id="COG3957">
    <property type="taxonomic scope" value="Bacteria"/>
</dbReference>
<dbReference type="HOGENOM" id="CLU_013954_2_0_3"/>
<dbReference type="OrthoDB" id="9768449at2"/>
<dbReference type="BioCyc" id="SYNEL:SYNPCC7942_2080-MONOMER"/>
<dbReference type="Proteomes" id="UP000889800">
    <property type="component" value="Chromosome"/>
</dbReference>
<dbReference type="GO" id="GO:0016832">
    <property type="term" value="F:aldehyde-lyase activity"/>
    <property type="evidence" value="ECO:0007669"/>
    <property type="project" value="UniProtKB-UniRule"/>
</dbReference>
<dbReference type="GO" id="GO:0005975">
    <property type="term" value="P:carbohydrate metabolic process"/>
    <property type="evidence" value="ECO:0007669"/>
    <property type="project" value="InterPro"/>
</dbReference>
<dbReference type="CDD" id="cd02011">
    <property type="entry name" value="TPP_PK"/>
    <property type="match status" value="1"/>
</dbReference>
<dbReference type="FunFam" id="3.40.50.970:FF:000091">
    <property type="entry name" value="Xylulose-5-phosphate/fructose-6-phosphate phosphoketolase"/>
    <property type="match status" value="1"/>
</dbReference>
<dbReference type="Gene3D" id="3.40.50.920">
    <property type="match status" value="1"/>
</dbReference>
<dbReference type="Gene3D" id="3.40.50.970">
    <property type="match status" value="2"/>
</dbReference>
<dbReference type="HAMAP" id="MF_01403">
    <property type="entry name" value="Phosphoketolase"/>
    <property type="match status" value="1"/>
</dbReference>
<dbReference type="InterPro" id="IPR023962">
    <property type="entry name" value="Phosphoketolase"/>
</dbReference>
<dbReference type="InterPro" id="IPR029061">
    <property type="entry name" value="THDP-binding"/>
</dbReference>
<dbReference type="InterPro" id="IPR009014">
    <property type="entry name" value="Transketo_C/PFOR_II"/>
</dbReference>
<dbReference type="InterPro" id="IPR005593">
    <property type="entry name" value="Xul5P/Fru6P_PKetolase"/>
</dbReference>
<dbReference type="InterPro" id="IPR018969">
    <property type="entry name" value="Xul5P/Fru6P_PKetolase_C"/>
</dbReference>
<dbReference type="InterPro" id="IPR019790">
    <property type="entry name" value="Xul5P/Fru6P_PKetolase_CS"/>
</dbReference>
<dbReference type="InterPro" id="IPR018970">
    <property type="entry name" value="Xul5P/Fru6P_PKetolase_N"/>
</dbReference>
<dbReference type="InterPro" id="IPR019789">
    <property type="entry name" value="Xul5P/Fru6P_PKetolase_ThDP_BS"/>
</dbReference>
<dbReference type="NCBIfam" id="NF003617">
    <property type="entry name" value="PRK05261.1-2"/>
    <property type="match status" value="1"/>
</dbReference>
<dbReference type="NCBIfam" id="NF003619">
    <property type="entry name" value="PRK05261.1-4"/>
    <property type="match status" value="1"/>
</dbReference>
<dbReference type="PANTHER" id="PTHR31273">
    <property type="entry name" value="PHOSPHOKETOLASE-RELATED"/>
    <property type="match status" value="1"/>
</dbReference>
<dbReference type="PANTHER" id="PTHR31273:SF0">
    <property type="entry name" value="PHOSPHOKETOLASE-RELATED"/>
    <property type="match status" value="1"/>
</dbReference>
<dbReference type="Pfam" id="PF03894">
    <property type="entry name" value="XFP"/>
    <property type="match status" value="1"/>
</dbReference>
<dbReference type="Pfam" id="PF09363">
    <property type="entry name" value="XFP_C"/>
    <property type="match status" value="1"/>
</dbReference>
<dbReference type="Pfam" id="PF09364">
    <property type="entry name" value="XFP_N"/>
    <property type="match status" value="1"/>
</dbReference>
<dbReference type="PIRSF" id="PIRSF017245">
    <property type="entry name" value="Phosphoketolase"/>
    <property type="match status" value="1"/>
</dbReference>
<dbReference type="SUPFAM" id="SSF52518">
    <property type="entry name" value="Thiamin diphosphate-binding fold (THDP-binding)"/>
    <property type="match status" value="2"/>
</dbReference>
<dbReference type="PROSITE" id="PS60002">
    <property type="entry name" value="PHOSPHOKETOLASE_1"/>
    <property type="match status" value="1"/>
</dbReference>
<dbReference type="PROSITE" id="PS60003">
    <property type="entry name" value="PHOSPHOKETOLASE_2"/>
    <property type="match status" value="1"/>
</dbReference>
<name>PHK_SYNE7</name>